<feature type="chain" id="PRO_0000118281" description="NADH-ubiquinone oxidoreductase chain 6">
    <location>
        <begin position="1"/>
        <end position="175"/>
    </location>
</feature>
<feature type="transmembrane region" description="Helical" evidence="3">
    <location>
        <begin position="1"/>
        <end position="21"/>
    </location>
</feature>
<feature type="transmembrane region" description="Helical" evidence="3">
    <location>
        <begin position="25"/>
        <end position="45"/>
    </location>
</feature>
<feature type="transmembrane region" description="Helical" evidence="3">
    <location>
        <begin position="47"/>
        <end position="67"/>
    </location>
</feature>
<feature type="transmembrane region" description="Helical" evidence="3">
    <location>
        <begin position="88"/>
        <end position="108"/>
    </location>
</feature>
<feature type="transmembrane region" description="Helical" evidence="3">
    <location>
        <begin position="149"/>
        <end position="169"/>
    </location>
</feature>
<accession>P92486</accession>
<keyword id="KW-0249">Electron transport</keyword>
<keyword id="KW-0472">Membrane</keyword>
<keyword id="KW-0496">Mitochondrion</keyword>
<keyword id="KW-0999">Mitochondrion inner membrane</keyword>
<keyword id="KW-0520">NAD</keyword>
<keyword id="KW-1185">Reference proteome</keyword>
<keyword id="KW-0679">Respiratory chain</keyword>
<keyword id="KW-1278">Translocase</keyword>
<keyword id="KW-0812">Transmembrane</keyword>
<keyword id="KW-1133">Transmembrane helix</keyword>
<keyword id="KW-0813">Transport</keyword>
<keyword id="KW-0830">Ubiquinone</keyword>
<sequence>MMTYIVFILSVIFVIGFVGFSSKPSPIYGGLVLIVSGGVGCGIIMNFGGSFLGLMVFLIYLGGMLVVFGYTTAMATEQYPEVWVSNATVMGVFLLGLLMEVMLVLYVLKSEEVGVVFKFSSVGHWAIYDIGNSGVFSEEIMGVAALYSYGAWVVVVTGWSLLVGVLVILEVTRGD</sequence>
<protein>
    <recommendedName>
        <fullName>NADH-ubiquinone oxidoreductase chain 6</fullName>
        <ecNumber evidence="1">7.1.1.2</ecNumber>
    </recommendedName>
    <alternativeName>
        <fullName>NADH dehydrogenase subunit 6</fullName>
    </alternativeName>
</protein>
<evidence type="ECO:0000250" key="1">
    <source>
        <dbReference type="UniProtKB" id="P03923"/>
    </source>
</evidence>
<evidence type="ECO:0000250" key="2">
    <source>
        <dbReference type="UniProtKB" id="P03924"/>
    </source>
</evidence>
<evidence type="ECO:0000255" key="3"/>
<evidence type="ECO:0000305" key="4"/>
<comment type="function">
    <text evidence="1">Core subunit of the mitochondrial membrane respiratory chain NADH dehydrogenase (Complex I) which catalyzes electron transfer from NADH through the respiratory chain, using ubiquinone as an electron acceptor. Essential for the catalytic activity and assembly of complex I.</text>
</comment>
<comment type="catalytic activity">
    <reaction evidence="1">
        <text>a ubiquinone + NADH + 5 H(+)(in) = a ubiquinol + NAD(+) + 4 H(+)(out)</text>
        <dbReference type="Rhea" id="RHEA:29091"/>
        <dbReference type="Rhea" id="RHEA-COMP:9565"/>
        <dbReference type="Rhea" id="RHEA-COMP:9566"/>
        <dbReference type="ChEBI" id="CHEBI:15378"/>
        <dbReference type="ChEBI" id="CHEBI:16389"/>
        <dbReference type="ChEBI" id="CHEBI:17976"/>
        <dbReference type="ChEBI" id="CHEBI:57540"/>
        <dbReference type="ChEBI" id="CHEBI:57945"/>
        <dbReference type="EC" id="7.1.1.2"/>
    </reaction>
</comment>
<comment type="subunit">
    <text evidence="2">Core subunit of respiratory chain NADH dehydrogenase (Complex I) which is composed of 45 different subunits.</text>
</comment>
<comment type="subcellular location">
    <subcellularLocation>
        <location evidence="2">Mitochondrion inner membrane</location>
        <topology evidence="3">Multi-pass membrane protein</topology>
    </subcellularLocation>
</comment>
<comment type="similarity">
    <text evidence="4">Belongs to the complex I subunit 6 family.</text>
</comment>
<dbReference type="EC" id="7.1.1.2" evidence="1"/>
<dbReference type="EMBL" id="X97337">
    <property type="protein sequence ID" value="CAA66025.1"/>
    <property type="molecule type" value="Genomic_DNA"/>
</dbReference>
<dbReference type="PIR" id="T11374">
    <property type="entry name" value="T11374"/>
</dbReference>
<dbReference type="RefSeq" id="NP_007392.1">
    <property type="nucleotide sequence ID" value="NC_001788.1"/>
</dbReference>
<dbReference type="SMR" id="P92486"/>
<dbReference type="GeneID" id="808057"/>
<dbReference type="KEGG" id="eai:808057"/>
<dbReference type="CTD" id="4541"/>
<dbReference type="Proteomes" id="UP000694387">
    <property type="component" value="Mitochondrion MT"/>
</dbReference>
<dbReference type="GO" id="GO:0005743">
    <property type="term" value="C:mitochondrial inner membrane"/>
    <property type="evidence" value="ECO:0000250"/>
    <property type="project" value="UniProtKB"/>
</dbReference>
<dbReference type="GO" id="GO:0008137">
    <property type="term" value="F:NADH dehydrogenase (ubiquinone) activity"/>
    <property type="evidence" value="ECO:0000250"/>
    <property type="project" value="UniProtKB"/>
</dbReference>
<dbReference type="GO" id="GO:0006120">
    <property type="term" value="P:mitochondrial electron transport, NADH to ubiquinone"/>
    <property type="evidence" value="ECO:0000250"/>
    <property type="project" value="UniProtKB"/>
</dbReference>
<dbReference type="GO" id="GO:0032981">
    <property type="term" value="P:mitochondrial respiratory chain complex I assembly"/>
    <property type="evidence" value="ECO:0000250"/>
    <property type="project" value="UniProtKB"/>
</dbReference>
<dbReference type="Gene3D" id="1.20.120.1200">
    <property type="entry name" value="NADH-ubiquinone/plastoquinone oxidoreductase chain 6, subunit NuoJ"/>
    <property type="match status" value="1"/>
</dbReference>
<dbReference type="InterPro" id="IPR050269">
    <property type="entry name" value="ComplexI_Subunit6"/>
</dbReference>
<dbReference type="InterPro" id="IPR001457">
    <property type="entry name" value="NADH_UbQ/plastoQ_OxRdtase_su6"/>
</dbReference>
<dbReference type="InterPro" id="IPR042106">
    <property type="entry name" value="Nuo/plastoQ_OxRdtase_6_NuoJ"/>
</dbReference>
<dbReference type="PANTHER" id="PTHR11435">
    <property type="entry name" value="NADH UBIQUINONE OXIDOREDUCTASE SUBUNIT ND6"/>
    <property type="match status" value="1"/>
</dbReference>
<dbReference type="PANTHER" id="PTHR11435:SF1">
    <property type="entry name" value="NADH-UBIQUINONE OXIDOREDUCTASE CHAIN 6"/>
    <property type="match status" value="1"/>
</dbReference>
<dbReference type="Pfam" id="PF00499">
    <property type="entry name" value="Oxidored_q3"/>
    <property type="match status" value="1"/>
</dbReference>
<name>NU6M_EQUAS</name>
<proteinExistence type="inferred from homology"/>
<reference key="1">
    <citation type="journal article" date="1996" name="J. Mol. Evol.">
        <title>The complete mitochondrial DNA (mtDNA) of the donkey and mtDNA comparisons among four closely related mammalian species-pairs.</title>
        <authorList>
            <person name="Xu X."/>
            <person name="Gullberg A."/>
            <person name="Arnason U."/>
        </authorList>
    </citation>
    <scope>NUCLEOTIDE SEQUENCE [GENOMIC DNA]</scope>
    <source>
        <tissue>Kidney</tissue>
    </source>
</reference>
<organism>
    <name type="scientific">Equus asinus</name>
    <name type="common">Donkey</name>
    <name type="synonym">Equus africanus asinus</name>
    <dbReference type="NCBI Taxonomy" id="9793"/>
    <lineage>
        <taxon>Eukaryota</taxon>
        <taxon>Metazoa</taxon>
        <taxon>Chordata</taxon>
        <taxon>Craniata</taxon>
        <taxon>Vertebrata</taxon>
        <taxon>Euteleostomi</taxon>
        <taxon>Mammalia</taxon>
        <taxon>Eutheria</taxon>
        <taxon>Laurasiatheria</taxon>
        <taxon>Perissodactyla</taxon>
        <taxon>Equidae</taxon>
        <taxon>Equus</taxon>
    </lineage>
</organism>
<geneLocation type="mitochondrion"/>
<gene>
    <name type="primary">MT-ND6</name>
    <name type="synonym">MTND6</name>
    <name type="synonym">NADH6</name>
    <name type="synonym">ND6</name>
</gene>